<name>RB12B_PONAB</name>
<proteinExistence type="evidence at transcript level"/>
<dbReference type="EMBL" id="CR857063">
    <property type="protein sequence ID" value="CAH89370.1"/>
    <property type="molecule type" value="mRNA"/>
</dbReference>
<dbReference type="STRING" id="9601.ENSPPYP00000021025"/>
<dbReference type="eggNOG" id="KOG4307">
    <property type="taxonomic scope" value="Eukaryota"/>
</dbReference>
<dbReference type="InParanoid" id="Q5RFT7"/>
<dbReference type="Proteomes" id="UP000001595">
    <property type="component" value="Unplaced"/>
</dbReference>
<dbReference type="GO" id="GO:0003723">
    <property type="term" value="F:RNA binding"/>
    <property type="evidence" value="ECO:0007669"/>
    <property type="project" value="UniProtKB-KW"/>
</dbReference>
<dbReference type="CDD" id="cd12746">
    <property type="entry name" value="RRM2_RBM12B"/>
    <property type="match status" value="1"/>
</dbReference>
<dbReference type="CDD" id="cd12513">
    <property type="entry name" value="RRM3_RBM12B"/>
    <property type="match status" value="1"/>
</dbReference>
<dbReference type="CDD" id="cd12748">
    <property type="entry name" value="RRM4_RBM12B"/>
    <property type="match status" value="1"/>
</dbReference>
<dbReference type="FunFam" id="3.30.70.330:FF:000193">
    <property type="entry name" value="RNA-binding motif protein 12"/>
    <property type="match status" value="1"/>
</dbReference>
<dbReference type="FunFam" id="3.30.70.330:FF:000372">
    <property type="entry name" value="RNA-binding motif protein 12B"/>
    <property type="match status" value="1"/>
</dbReference>
<dbReference type="FunFam" id="3.30.70.330:FF:000489">
    <property type="entry name" value="RNA-binding protein 12B"/>
    <property type="match status" value="1"/>
</dbReference>
<dbReference type="Gene3D" id="3.30.70.330">
    <property type="match status" value="4"/>
</dbReference>
<dbReference type="InterPro" id="IPR050666">
    <property type="entry name" value="ESRP"/>
</dbReference>
<dbReference type="InterPro" id="IPR012677">
    <property type="entry name" value="Nucleotide-bd_a/b_plait_sf"/>
</dbReference>
<dbReference type="InterPro" id="IPR035979">
    <property type="entry name" value="RBD_domain_sf"/>
</dbReference>
<dbReference type="InterPro" id="IPR034588">
    <property type="entry name" value="RBM12B_RRM2"/>
</dbReference>
<dbReference type="InterPro" id="IPR034858">
    <property type="entry name" value="RBM12B_RRM3"/>
</dbReference>
<dbReference type="InterPro" id="IPR047188">
    <property type="entry name" value="RRM4_RBM12B"/>
</dbReference>
<dbReference type="InterPro" id="IPR000504">
    <property type="entry name" value="RRM_dom"/>
</dbReference>
<dbReference type="PANTHER" id="PTHR13976">
    <property type="entry name" value="HETEROGENEOUS NUCLEAR RIBONUCLEOPROTEIN-RELATED"/>
    <property type="match status" value="1"/>
</dbReference>
<dbReference type="Pfam" id="PF00076">
    <property type="entry name" value="RRM_1"/>
    <property type="match status" value="2"/>
</dbReference>
<dbReference type="SMART" id="SM00360">
    <property type="entry name" value="RRM"/>
    <property type="match status" value="4"/>
</dbReference>
<dbReference type="SUPFAM" id="SSF54928">
    <property type="entry name" value="RNA-binding domain, RBD"/>
    <property type="match status" value="4"/>
</dbReference>
<dbReference type="PROSITE" id="PS50102">
    <property type="entry name" value="RRM"/>
    <property type="match status" value="3"/>
</dbReference>
<protein>
    <recommendedName>
        <fullName>RNA-binding protein 12B</fullName>
    </recommendedName>
    <alternativeName>
        <fullName>RNA-binding motif protein 12B</fullName>
    </alternativeName>
</protein>
<accession>Q5RFT7</accession>
<keyword id="KW-0007">Acetylation</keyword>
<keyword id="KW-1017">Isopeptide bond</keyword>
<keyword id="KW-0597">Phosphoprotein</keyword>
<keyword id="KW-1185">Reference proteome</keyword>
<keyword id="KW-0677">Repeat</keyword>
<keyword id="KW-0694">RNA-binding</keyword>
<keyword id="KW-0832">Ubl conjugation</keyword>
<organism>
    <name type="scientific">Pongo abelii</name>
    <name type="common">Sumatran orangutan</name>
    <name type="synonym">Pongo pygmaeus abelii</name>
    <dbReference type="NCBI Taxonomy" id="9601"/>
    <lineage>
        <taxon>Eukaryota</taxon>
        <taxon>Metazoa</taxon>
        <taxon>Chordata</taxon>
        <taxon>Craniata</taxon>
        <taxon>Vertebrata</taxon>
        <taxon>Euteleostomi</taxon>
        <taxon>Mammalia</taxon>
        <taxon>Eutheria</taxon>
        <taxon>Euarchontoglires</taxon>
        <taxon>Primates</taxon>
        <taxon>Haplorrhini</taxon>
        <taxon>Catarrhini</taxon>
        <taxon>Hominidae</taxon>
        <taxon>Pongo</taxon>
    </lineage>
</organism>
<reference key="1">
    <citation type="submission" date="2004-11" db="EMBL/GenBank/DDBJ databases">
        <authorList>
            <consortium name="The German cDNA consortium"/>
        </authorList>
    </citation>
    <scope>NUCLEOTIDE SEQUENCE [LARGE SCALE MRNA]</scope>
    <source>
        <tissue>Brain cortex</tissue>
    </source>
</reference>
<feature type="chain" id="PRO_0000273367" description="RNA-binding protein 12B">
    <location>
        <begin position="1"/>
        <end position="761"/>
    </location>
</feature>
<feature type="domain" description="RRM 1" evidence="2">
    <location>
        <begin position="155"/>
        <end position="230"/>
    </location>
</feature>
<feature type="domain" description="RRM 2" evidence="2">
    <location>
        <begin position="284"/>
        <end position="360"/>
    </location>
</feature>
<feature type="domain" description="RRM 3" evidence="2">
    <location>
        <begin position="400"/>
        <end position="477"/>
    </location>
</feature>
<feature type="region of interest" description="Disordered" evidence="3">
    <location>
        <begin position="120"/>
        <end position="147"/>
    </location>
</feature>
<feature type="region of interest" description="Disordered" evidence="3">
    <location>
        <begin position="247"/>
        <end position="278"/>
    </location>
</feature>
<feature type="region of interest" description="Disordered" evidence="3">
    <location>
        <begin position="372"/>
        <end position="392"/>
    </location>
</feature>
<feature type="region of interest" description="Disordered" evidence="3">
    <location>
        <begin position="538"/>
        <end position="690"/>
    </location>
</feature>
<feature type="compositionally biased region" description="Basic and acidic residues" evidence="3">
    <location>
        <begin position="247"/>
        <end position="262"/>
    </location>
</feature>
<feature type="compositionally biased region" description="Basic residues" evidence="3">
    <location>
        <begin position="263"/>
        <end position="278"/>
    </location>
</feature>
<feature type="compositionally biased region" description="Basic and acidic residues" evidence="3">
    <location>
        <begin position="372"/>
        <end position="384"/>
    </location>
</feature>
<feature type="compositionally biased region" description="Basic and acidic residues" evidence="3">
    <location>
        <begin position="538"/>
        <end position="621"/>
    </location>
</feature>
<feature type="compositionally biased region" description="Polar residues" evidence="3">
    <location>
        <begin position="627"/>
        <end position="654"/>
    </location>
</feature>
<feature type="compositionally biased region" description="Low complexity" evidence="3">
    <location>
        <begin position="661"/>
        <end position="672"/>
    </location>
</feature>
<feature type="modified residue" description="Phosphoserine" evidence="1">
    <location>
        <position position="98"/>
    </location>
</feature>
<feature type="modified residue" description="Phosphoserine" evidence="1">
    <location>
        <position position="101"/>
    </location>
</feature>
<feature type="modified residue" description="Phosphoserine" evidence="1">
    <location>
        <position position="112"/>
    </location>
</feature>
<feature type="modified residue" description="Phosphoserine" evidence="1">
    <location>
        <position position="250"/>
    </location>
</feature>
<feature type="modified residue" description="Phosphoserine" evidence="1">
    <location>
        <position position="254"/>
    </location>
</feature>
<feature type="modified residue" description="Phosphothreonine" evidence="1">
    <location>
        <position position="276"/>
    </location>
</feature>
<feature type="modified residue" description="Phosphoserine" evidence="1">
    <location>
        <position position="278"/>
    </location>
</feature>
<feature type="modified residue" description="Phosphoserine" evidence="1">
    <location>
        <position position="280"/>
    </location>
</feature>
<feature type="modified residue" description="Phosphoserine" evidence="1">
    <location>
        <position position="292"/>
    </location>
</feature>
<feature type="modified residue" description="Phosphoserine" evidence="1">
    <location>
        <position position="294"/>
    </location>
</feature>
<feature type="modified residue" description="N6-acetyllysine" evidence="1">
    <location>
        <position position="319"/>
    </location>
</feature>
<feature type="modified residue" description="Phosphoserine" evidence="1">
    <location>
        <position position="377"/>
    </location>
</feature>
<feature type="modified residue" description="Phosphoserine" evidence="1">
    <location>
        <position position="575"/>
    </location>
</feature>
<feature type="modified residue" description="Phosphoserine" evidence="1">
    <location>
        <position position="591"/>
    </location>
</feature>
<feature type="cross-link" description="Glycyl lysine isopeptide (Lys-Gly) (interchain with G-Cter in SUMO2)" evidence="1">
    <location>
        <position position="114"/>
    </location>
</feature>
<feature type="cross-link" description="Glycyl lysine isopeptide (Lys-Gly) (interchain with G-Cter in SUMO2)" evidence="1">
    <location>
        <position position="151"/>
    </location>
</feature>
<feature type="cross-link" description="Glycyl lysine isopeptide (Lys-Gly) (interchain with G-Cter in SUMO2)" evidence="1">
    <location>
        <position position="335"/>
    </location>
</feature>
<feature type="cross-link" description="Glycyl lysine isopeptide (Lys-Gly) (interchain with G-Cter in SUMO2)" evidence="1">
    <location>
        <position position="514"/>
    </location>
</feature>
<feature type="cross-link" description="Glycyl lysine isopeptide (Lys-Gly) (interchain with G-Cter in SUMO2)" evidence="1">
    <location>
        <position position="541"/>
    </location>
</feature>
<gene>
    <name type="primary">RBM12B</name>
</gene>
<sequence>MAVVIRLLGLPFIAGPVDIRHFFTGLTIPDGGVHIIGGEIGEAFIIFATDEDARRAISRSGGFIKDSSVELFLSSKAEMQKTIEMKRTDRVGRGRPGSGTSGVGSLSNIIESVKEEASNSGYGSSINQDAGFHSNGTGHGNLRPRKTRPLKAENPYLFLRGLPYLVNEDDVRVFFSGLCVDGVIFLKHHDGRNNGDAIVKFASCVDASGGLKCHRSFMGSRFIEVMQGSEQQWIEFGGNAVKEGDVLRRSEEHSPPRGINDRHFRKRSHSKSPRRTRSRSPLGFYVHLKNLSLSIDERDLRNFFRGTDLTDEQIRFLYKDENRTRYAFVMFKTLKDYNTALSLHKTVLQYRPVHIDPISRKQMLKFIARYEKKRSGSPERDRPGHVSQKYSQEGNSGQKLCIYIRNFPFDVTKVEVQKFFADFLLAEDDIYLLYDDKGVGLGEALVKFKSEEQAMKAERLNRRRFLGTEVLLRLISEAQMQEFGVNFSLMSSEKMQARSQSRERGDHSQLFDSKDPPVYSVGAFENFKHHIEDLRQLDNFKHPQRDFRQPDRHPPEEFRHSSEDFRFPPEDFRHSPEDFRRPREEDFRRPSEEDFRRPWEEDFRRPPEDDFRHPREEDWRRPLGGLLQSTSGGHPQSISGGHPQSISGARPRSTSGDRPRSISGGRLRSISGAPERKISGTHQMKTSGALPMKTLGTLLMRTSGAPRRKILDALLMRTSGSSQRKTLGKLRRRTLDFLTILDLLVRILGARLMILEVTALL</sequence>
<evidence type="ECO:0000250" key="1">
    <source>
        <dbReference type="UniProtKB" id="Q8IXT5"/>
    </source>
</evidence>
<evidence type="ECO:0000255" key="2">
    <source>
        <dbReference type="PROSITE-ProRule" id="PRU00176"/>
    </source>
</evidence>
<evidence type="ECO:0000256" key="3">
    <source>
        <dbReference type="SAM" id="MobiDB-lite"/>
    </source>
</evidence>